<gene>
    <name evidence="1" type="primary">rplQ</name>
    <name type="ordered locus">Hhal_0832</name>
</gene>
<accession>A1WV96</accession>
<organism>
    <name type="scientific">Halorhodospira halophila (strain DSM 244 / SL1)</name>
    <name type="common">Ectothiorhodospira halophila (strain DSM 244 / SL1)</name>
    <dbReference type="NCBI Taxonomy" id="349124"/>
    <lineage>
        <taxon>Bacteria</taxon>
        <taxon>Pseudomonadati</taxon>
        <taxon>Pseudomonadota</taxon>
        <taxon>Gammaproteobacteria</taxon>
        <taxon>Chromatiales</taxon>
        <taxon>Ectothiorhodospiraceae</taxon>
        <taxon>Halorhodospira</taxon>
    </lineage>
</organism>
<evidence type="ECO:0000255" key="1">
    <source>
        <dbReference type="HAMAP-Rule" id="MF_01368"/>
    </source>
</evidence>
<evidence type="ECO:0000305" key="2"/>
<comment type="subunit">
    <text evidence="1">Part of the 50S ribosomal subunit. Contacts protein L32.</text>
</comment>
<comment type="similarity">
    <text evidence="1">Belongs to the bacterial ribosomal protein bL17 family.</text>
</comment>
<sequence length="138" mass="15911">MRHRKAGRHLNRDNAHRKAMFKNLAAALFREEEIRTTVPKAKELRRVAEPLITLAKEDTTANRRLAFARLRDKEMVTKLFEELGPHFKERPGGYMRILRCGFRKGDGAPMALVQLVDREEAIAARRETEEDAEETAEA</sequence>
<name>RL17_HALHL</name>
<feature type="chain" id="PRO_1000055839" description="Large ribosomal subunit protein bL17">
    <location>
        <begin position="1"/>
        <end position="138"/>
    </location>
</feature>
<proteinExistence type="inferred from homology"/>
<reference key="1">
    <citation type="submission" date="2006-12" db="EMBL/GenBank/DDBJ databases">
        <title>Complete sequence of Halorhodospira halophila SL1.</title>
        <authorList>
            <consortium name="US DOE Joint Genome Institute"/>
            <person name="Copeland A."/>
            <person name="Lucas S."/>
            <person name="Lapidus A."/>
            <person name="Barry K."/>
            <person name="Detter J.C."/>
            <person name="Glavina del Rio T."/>
            <person name="Hammon N."/>
            <person name="Israni S."/>
            <person name="Dalin E."/>
            <person name="Tice H."/>
            <person name="Pitluck S."/>
            <person name="Saunders E."/>
            <person name="Brettin T."/>
            <person name="Bruce D."/>
            <person name="Han C."/>
            <person name="Tapia R."/>
            <person name="Schmutz J."/>
            <person name="Larimer F."/>
            <person name="Land M."/>
            <person name="Hauser L."/>
            <person name="Kyrpides N."/>
            <person name="Mikhailova N."/>
            <person name="Hoff W."/>
            <person name="Richardson P."/>
        </authorList>
    </citation>
    <scope>NUCLEOTIDE SEQUENCE [LARGE SCALE GENOMIC DNA]</scope>
    <source>
        <strain>DSM 244 / SL1</strain>
    </source>
</reference>
<protein>
    <recommendedName>
        <fullName evidence="1">Large ribosomal subunit protein bL17</fullName>
    </recommendedName>
    <alternativeName>
        <fullName evidence="2">50S ribosomal protein L17</fullName>
    </alternativeName>
</protein>
<dbReference type="EMBL" id="CP000544">
    <property type="protein sequence ID" value="ABM61608.1"/>
    <property type="molecule type" value="Genomic_DNA"/>
</dbReference>
<dbReference type="RefSeq" id="WP_011813631.1">
    <property type="nucleotide sequence ID" value="NC_008789.1"/>
</dbReference>
<dbReference type="SMR" id="A1WV96"/>
<dbReference type="STRING" id="349124.Hhal_0832"/>
<dbReference type="KEGG" id="hha:Hhal_0832"/>
<dbReference type="eggNOG" id="COG0203">
    <property type="taxonomic scope" value="Bacteria"/>
</dbReference>
<dbReference type="HOGENOM" id="CLU_074407_2_0_6"/>
<dbReference type="OrthoDB" id="9809073at2"/>
<dbReference type="Proteomes" id="UP000000647">
    <property type="component" value="Chromosome"/>
</dbReference>
<dbReference type="GO" id="GO:0022625">
    <property type="term" value="C:cytosolic large ribosomal subunit"/>
    <property type="evidence" value="ECO:0007669"/>
    <property type="project" value="TreeGrafter"/>
</dbReference>
<dbReference type="GO" id="GO:0003735">
    <property type="term" value="F:structural constituent of ribosome"/>
    <property type="evidence" value="ECO:0007669"/>
    <property type="project" value="InterPro"/>
</dbReference>
<dbReference type="GO" id="GO:0006412">
    <property type="term" value="P:translation"/>
    <property type="evidence" value="ECO:0007669"/>
    <property type="project" value="UniProtKB-UniRule"/>
</dbReference>
<dbReference type="FunFam" id="3.90.1030.10:FF:000001">
    <property type="entry name" value="50S ribosomal protein L17"/>
    <property type="match status" value="1"/>
</dbReference>
<dbReference type="Gene3D" id="3.90.1030.10">
    <property type="entry name" value="Ribosomal protein L17"/>
    <property type="match status" value="1"/>
</dbReference>
<dbReference type="HAMAP" id="MF_01368">
    <property type="entry name" value="Ribosomal_bL17"/>
    <property type="match status" value="1"/>
</dbReference>
<dbReference type="InterPro" id="IPR000456">
    <property type="entry name" value="Ribosomal_bL17"/>
</dbReference>
<dbReference type="InterPro" id="IPR047859">
    <property type="entry name" value="Ribosomal_bL17_CS"/>
</dbReference>
<dbReference type="InterPro" id="IPR036373">
    <property type="entry name" value="Ribosomal_bL17_sf"/>
</dbReference>
<dbReference type="NCBIfam" id="TIGR00059">
    <property type="entry name" value="L17"/>
    <property type="match status" value="1"/>
</dbReference>
<dbReference type="PANTHER" id="PTHR14413:SF16">
    <property type="entry name" value="LARGE RIBOSOMAL SUBUNIT PROTEIN BL17M"/>
    <property type="match status" value="1"/>
</dbReference>
<dbReference type="PANTHER" id="PTHR14413">
    <property type="entry name" value="RIBOSOMAL PROTEIN L17"/>
    <property type="match status" value="1"/>
</dbReference>
<dbReference type="Pfam" id="PF01196">
    <property type="entry name" value="Ribosomal_L17"/>
    <property type="match status" value="1"/>
</dbReference>
<dbReference type="SUPFAM" id="SSF64263">
    <property type="entry name" value="Prokaryotic ribosomal protein L17"/>
    <property type="match status" value="1"/>
</dbReference>
<dbReference type="PROSITE" id="PS01167">
    <property type="entry name" value="RIBOSOMAL_L17"/>
    <property type="match status" value="1"/>
</dbReference>
<keyword id="KW-1185">Reference proteome</keyword>
<keyword id="KW-0687">Ribonucleoprotein</keyword>
<keyword id="KW-0689">Ribosomal protein</keyword>